<dbReference type="EC" id="1.-.-.-" evidence="6"/>
<dbReference type="EMBL" id="BK013344">
    <property type="protein sequence ID" value="DAD54578.1"/>
    <property type="molecule type" value="Genomic_DNA"/>
</dbReference>
<dbReference type="SMR" id="A0A831A9C9"/>
<dbReference type="GO" id="GO:0016020">
    <property type="term" value="C:membrane"/>
    <property type="evidence" value="ECO:0007669"/>
    <property type="project" value="UniProtKB-SubCell"/>
</dbReference>
<dbReference type="GO" id="GO:0020037">
    <property type="term" value="F:heme binding"/>
    <property type="evidence" value="ECO:0007669"/>
    <property type="project" value="InterPro"/>
</dbReference>
<dbReference type="GO" id="GO:0005506">
    <property type="term" value="F:iron ion binding"/>
    <property type="evidence" value="ECO:0007669"/>
    <property type="project" value="InterPro"/>
</dbReference>
<dbReference type="GO" id="GO:0004497">
    <property type="term" value="F:monooxygenase activity"/>
    <property type="evidence" value="ECO:0007669"/>
    <property type="project" value="UniProtKB-KW"/>
</dbReference>
<dbReference type="GO" id="GO:0016705">
    <property type="term" value="F:oxidoreductase activity, acting on paired donors, with incorporation or reduction of molecular oxygen"/>
    <property type="evidence" value="ECO:0007669"/>
    <property type="project" value="InterPro"/>
</dbReference>
<dbReference type="CDD" id="cd11062">
    <property type="entry name" value="CYP58-like"/>
    <property type="match status" value="1"/>
</dbReference>
<dbReference type="FunFam" id="1.10.630.10:FF:000069">
    <property type="entry name" value="Cytochrome P450, putative (Eurofung)"/>
    <property type="match status" value="1"/>
</dbReference>
<dbReference type="Gene3D" id="1.10.630.10">
    <property type="entry name" value="Cytochrome P450"/>
    <property type="match status" value="1"/>
</dbReference>
<dbReference type="InterPro" id="IPR001128">
    <property type="entry name" value="Cyt_P450"/>
</dbReference>
<dbReference type="InterPro" id="IPR017972">
    <property type="entry name" value="Cyt_P450_CS"/>
</dbReference>
<dbReference type="InterPro" id="IPR002401">
    <property type="entry name" value="Cyt_P450_E_grp-I"/>
</dbReference>
<dbReference type="InterPro" id="IPR036396">
    <property type="entry name" value="Cyt_P450_sf"/>
</dbReference>
<dbReference type="InterPro" id="IPR050121">
    <property type="entry name" value="Cytochrome_P450_monoxygenase"/>
</dbReference>
<dbReference type="PANTHER" id="PTHR24305">
    <property type="entry name" value="CYTOCHROME P450"/>
    <property type="match status" value="1"/>
</dbReference>
<dbReference type="PANTHER" id="PTHR24305:SF157">
    <property type="entry name" value="N-ACETYLTRYPTOPHAN 6-HYDROXYLASE IVOC-RELATED"/>
    <property type="match status" value="1"/>
</dbReference>
<dbReference type="Pfam" id="PF00067">
    <property type="entry name" value="p450"/>
    <property type="match status" value="1"/>
</dbReference>
<dbReference type="PRINTS" id="PR00463">
    <property type="entry name" value="EP450I"/>
</dbReference>
<dbReference type="PRINTS" id="PR00385">
    <property type="entry name" value="P450"/>
</dbReference>
<dbReference type="SUPFAM" id="SSF48264">
    <property type="entry name" value="Cytochrome P450"/>
    <property type="match status" value="1"/>
</dbReference>
<dbReference type="PROSITE" id="PS00086">
    <property type="entry name" value="CYTOCHROME_P450"/>
    <property type="match status" value="1"/>
</dbReference>
<name>FSCE_FUSEQ</name>
<accession>A0A831A9C9</accession>
<reference key="1">
    <citation type="journal article" date="2021" name="Org. Biomol. Chem.">
        <title>Fusarochromene, a novel tryptophan-derived metabolite from Fusarium sacchari.</title>
        <authorList>
            <person name="Marshall J.W."/>
            <person name="de Mattos-Shipley K.M.J."/>
            <person name="Ghannam I.A.Y."/>
            <person name="Munawar A."/>
            <person name="Killen J.C."/>
            <person name="Lazarus C.M."/>
            <person name="Cox R.J."/>
            <person name="Willis C.L."/>
            <person name="Simpson T.J."/>
        </authorList>
    </citation>
    <scope>NUCLEOTIDE SEQUENCE [GENOMIC DNA]</scope>
    <scope>FUNCTION</scope>
    <scope>PATHWAY</scope>
</reference>
<organism>
    <name type="scientific">Fusarium equiseti</name>
    <name type="common">Fusarium scirpi</name>
    <dbReference type="NCBI Taxonomy" id="61235"/>
    <lineage>
        <taxon>Eukaryota</taxon>
        <taxon>Fungi</taxon>
        <taxon>Dikarya</taxon>
        <taxon>Ascomycota</taxon>
        <taxon>Pezizomycotina</taxon>
        <taxon>Sordariomycetes</taxon>
        <taxon>Hypocreomycetidae</taxon>
        <taxon>Hypocreales</taxon>
        <taxon>Nectriaceae</taxon>
        <taxon>Fusarium</taxon>
        <taxon>Fusarium incarnatum-equiseti species complex</taxon>
    </lineage>
</organism>
<protein>
    <recommendedName>
        <fullName evidence="4">Tryptophan 6-hydroxylase fscE</fullName>
        <ecNumber evidence="6">1.-.-.-</ecNumber>
    </recommendedName>
    <alternativeName>
        <fullName evidence="4">Cytochrome P450 monooxygenase fscE</fullName>
    </alternativeName>
    <alternativeName>
        <fullName evidence="4">Fusarochromene biosynthesis cluster protein E</fullName>
    </alternativeName>
</protein>
<sequence>MVSSLNNLGVLLPIEGVIILVFVLSCFSLAIKRLYFSPLAKFPGPKLAALTMWYEFYYDVVKRGNYFRQIAKMHDQYGPVVRINPFELHVNDPTFYPILYSSSTKKRDKWSWAAGMFGNNTSVFSTVPHDHHRIRRAALNPLFSRTAIKQLEPTIKCQMHELSRRLDSFCESGMVLDLGLAFTVFAADVISAYCFGEPFGLLQDPDFAPEWVETVAAPSELGHLIKQFPWALGLFRLLPRSLIGVISPAIVRLYTIQEWMSLNVQSLISKRHDDHSSSAKSCVFEALLRSKLPASEKTVDRLKGEGQTLIGAGTLTTANVLKHVVFHTLDNPDRLHALAAELEAEFPDPNEDVSLDRLERLPLLTAYIKEALRLGYGVTHRLQLLADEPLHCNGMIIPPRTPVGMTSIFMHDDPTVFPNPREFDPDRWLGEVEDRRHLERCFVPFSKGTRMCLGMHLAWAEIYIVIATVFRSYSFQLHDTDRSHIEMAHDFFDPAPKLDSKGLRVTVQRK</sequence>
<evidence type="ECO:0000250" key="1">
    <source>
        <dbReference type="UniProtKB" id="P04798"/>
    </source>
</evidence>
<evidence type="ECO:0000255" key="2"/>
<evidence type="ECO:0000269" key="3">
    <source>
    </source>
</evidence>
<evidence type="ECO:0000303" key="4">
    <source>
    </source>
</evidence>
<evidence type="ECO:0000305" key="5"/>
<evidence type="ECO:0000305" key="6">
    <source>
    </source>
</evidence>
<proteinExistence type="inferred from homology"/>
<keyword id="KW-0349">Heme</keyword>
<keyword id="KW-0408">Iron</keyword>
<keyword id="KW-0472">Membrane</keyword>
<keyword id="KW-0479">Metal-binding</keyword>
<keyword id="KW-0503">Monooxygenase</keyword>
<keyword id="KW-0560">Oxidoreductase</keyword>
<keyword id="KW-0812">Transmembrane</keyword>
<keyword id="KW-1133">Transmembrane helix</keyword>
<gene>
    <name evidence="4" type="primary">fscE</name>
</gene>
<feature type="chain" id="PRO_0000461413" description="Tryptophan 6-hydroxylase fscE">
    <location>
        <begin position="1"/>
        <end position="510"/>
    </location>
</feature>
<feature type="transmembrane region" description="Helical" evidence="2">
    <location>
        <begin position="11"/>
        <end position="31"/>
    </location>
</feature>
<feature type="binding site" description="axial binding residue" evidence="1">
    <location>
        <position position="452"/>
    </location>
    <ligand>
        <name>heme</name>
        <dbReference type="ChEBI" id="CHEBI:30413"/>
    </ligand>
    <ligandPart>
        <name>Fe</name>
        <dbReference type="ChEBI" id="CHEBI:18248"/>
    </ligandPart>
</feature>
<comment type="function">
    <text evidence="3 6">Tryptophan 6-hydroxylase; part of the fragmented gene cluster that mediates the biosynthesis of fusarochromene, a tryptophan-derived metabolite closely related to a group of mycotoxins including fusarochromanone (PubMed:33107888). Within the pathway, fscE hydroxalates the first intermediate D-tryptophan to yield 6-hydroxytryptophan (Probable). The first step of the pathway is the epimerization of L-tryptophan to D-tryptophan in the presence of the NRPS-like tryptophan epimerase fscC. D-tryptophan is subsequently hydroxylated by the tryptophan 6-hydroxylase fscE to yield 6-hydroxytryptophan. The pyrrole ring undergoes cleavaged by the tryptophan 2,3-dioxygenase fscD and is finally converted to 4-hydroxykyrunenine by the hydrolase fscH. The NRPS-like oxidoreductase fscA reduces the carboxyl group to primary alcohol and the DMATS-type prenyltransferase fscG performs prenylation, followed by the formation of a chromene ring catalyzed by the oxidoreductase fscI, which leads to desacetylfusarochromene. Epoxidation by fscF and rearrangement reactions of chromene double bonds convert compound desacetylfusarochromene to fusarochromanones. Although specific acetyltransferases were not found near the fsc gene cluster, several predicted enzymes containing the N-acetyltransferase superfamily domain are present in the genome of F.equiseti. These predicted enzymes may have the potential to convert desacetylfusarochromene to fusarochromene (Probable).</text>
</comment>
<comment type="cofactor">
    <cofactor evidence="1">
        <name>heme</name>
        <dbReference type="ChEBI" id="CHEBI:30413"/>
    </cofactor>
</comment>
<comment type="pathway">
    <text evidence="6">Secondary metabolite biosynthesis.</text>
</comment>
<comment type="subcellular location">
    <subcellularLocation>
        <location evidence="2">Membrane</location>
        <topology evidence="2">Single-pass membrane protein</topology>
    </subcellularLocation>
</comment>
<comment type="similarity">
    <text evidence="5">Belongs to the cytochrome P450 family.</text>
</comment>